<feature type="chain" id="PRO_0000148922" description="Somatoliberin">
    <location>
        <begin position="1"/>
        <end position="44"/>
    </location>
</feature>
<feature type="modified residue" description="Leucine amide" evidence="1">
    <location>
        <position position="44"/>
    </location>
</feature>
<reference key="1">
    <citation type="journal article" date="1984" name="Biochem. Biophys. Res. Commun.">
        <title>Growth hormone-releasing factor from ovine and caprine hypothalamus: isolation, sequence analysis and total synthesis.</title>
        <authorList>
            <person name="Brazeau P."/>
            <person name="Boehlen P."/>
            <person name="Esch F."/>
            <person name="Ling N."/>
            <person name="Wehrenberg W.B."/>
            <person name="Guillemin R."/>
        </authorList>
    </citation>
    <scope>PROTEIN SEQUENCE</scope>
    <scope>AMIDATION AT LEU-44</scope>
</reference>
<dbReference type="SMR" id="P07217"/>
<dbReference type="STRING" id="9940.ENSOARP00000019136"/>
<dbReference type="PaxDb" id="9940-ENSOARP00000019136"/>
<dbReference type="eggNOG" id="ENOG502S2N6">
    <property type="taxonomic scope" value="Eukaryota"/>
</dbReference>
<dbReference type="Proteomes" id="UP000002356">
    <property type="component" value="Unplaced"/>
</dbReference>
<dbReference type="GO" id="GO:0005615">
    <property type="term" value="C:extracellular space"/>
    <property type="evidence" value="ECO:0007669"/>
    <property type="project" value="TreeGrafter"/>
</dbReference>
<dbReference type="GO" id="GO:0043204">
    <property type="term" value="C:perikaryon"/>
    <property type="evidence" value="ECO:0007669"/>
    <property type="project" value="TreeGrafter"/>
</dbReference>
<dbReference type="GO" id="GO:0043195">
    <property type="term" value="C:terminal bouton"/>
    <property type="evidence" value="ECO:0007669"/>
    <property type="project" value="TreeGrafter"/>
</dbReference>
<dbReference type="GO" id="GO:0016608">
    <property type="term" value="F:growth hormone-releasing hormone activity"/>
    <property type="evidence" value="ECO:0007669"/>
    <property type="project" value="TreeGrafter"/>
</dbReference>
<dbReference type="GO" id="GO:0031770">
    <property type="term" value="F:growth hormone-releasing hormone receptor binding"/>
    <property type="evidence" value="ECO:0007669"/>
    <property type="project" value="TreeGrafter"/>
</dbReference>
<dbReference type="GO" id="GO:0005184">
    <property type="term" value="F:neuropeptide hormone activity"/>
    <property type="evidence" value="ECO:0007669"/>
    <property type="project" value="InterPro"/>
</dbReference>
<dbReference type="GO" id="GO:0051428">
    <property type="term" value="F:peptide hormone receptor binding"/>
    <property type="evidence" value="ECO:0007669"/>
    <property type="project" value="TreeGrafter"/>
</dbReference>
<dbReference type="GO" id="GO:0007189">
    <property type="term" value="P:adenylate cyclase-activating G protein-coupled receptor signaling pathway"/>
    <property type="evidence" value="ECO:0007669"/>
    <property type="project" value="TreeGrafter"/>
</dbReference>
<dbReference type="GO" id="GO:0030252">
    <property type="term" value="P:growth hormone secretion"/>
    <property type="evidence" value="ECO:0007669"/>
    <property type="project" value="TreeGrafter"/>
</dbReference>
<dbReference type="GO" id="GO:0032880">
    <property type="term" value="P:regulation of protein localization"/>
    <property type="evidence" value="ECO:0007669"/>
    <property type="project" value="TreeGrafter"/>
</dbReference>
<dbReference type="InterPro" id="IPR000532">
    <property type="entry name" value="Glucagon_GIP_secretin_VIP"/>
</dbReference>
<dbReference type="InterPro" id="IPR046963">
    <property type="entry name" value="VIP/GHRH-like"/>
</dbReference>
<dbReference type="PANTHER" id="PTHR11213">
    <property type="entry name" value="GLUCAGON-FAMILY NEUROPEPTIDE"/>
    <property type="match status" value="1"/>
</dbReference>
<dbReference type="PANTHER" id="PTHR11213:SF6">
    <property type="entry name" value="SOMATOLIBERIN"/>
    <property type="match status" value="1"/>
</dbReference>
<dbReference type="Pfam" id="PF00123">
    <property type="entry name" value="Hormone_2"/>
    <property type="match status" value="1"/>
</dbReference>
<dbReference type="SMART" id="SM00070">
    <property type="entry name" value="GLUCA"/>
    <property type="match status" value="1"/>
</dbReference>
<dbReference type="PROSITE" id="PS00260">
    <property type="entry name" value="GLUCAGON"/>
    <property type="match status" value="1"/>
</dbReference>
<name>SLIB_SHEEP</name>
<organism>
    <name type="scientific">Ovis aries</name>
    <name type="common">Sheep</name>
    <dbReference type="NCBI Taxonomy" id="9940"/>
    <lineage>
        <taxon>Eukaryota</taxon>
        <taxon>Metazoa</taxon>
        <taxon>Chordata</taxon>
        <taxon>Craniata</taxon>
        <taxon>Vertebrata</taxon>
        <taxon>Euteleostomi</taxon>
        <taxon>Mammalia</taxon>
        <taxon>Eutheria</taxon>
        <taxon>Laurasiatheria</taxon>
        <taxon>Artiodactyla</taxon>
        <taxon>Ruminantia</taxon>
        <taxon>Pecora</taxon>
        <taxon>Bovidae</taxon>
        <taxon>Caprinae</taxon>
        <taxon>Ovis</taxon>
    </lineage>
</organism>
<sequence>YADAIFTNSYRKILGQLSARKLLQDIMNRQQGERNQEQGAKVRL</sequence>
<comment type="function">
    <text>GRF is released by the hypothalamus and acts on the adenohypophyse to stimulate the secretion of growth hormone.</text>
</comment>
<comment type="subcellular location">
    <subcellularLocation>
        <location>Secreted</location>
    </subcellularLocation>
</comment>
<comment type="similarity">
    <text evidence="2">Belongs to the glucagon family.</text>
</comment>
<proteinExistence type="evidence at protein level"/>
<evidence type="ECO:0000269" key="1">
    <source>
    </source>
</evidence>
<evidence type="ECO:0000305" key="2"/>
<keyword id="KW-0027">Amidation</keyword>
<keyword id="KW-0903">Direct protein sequencing</keyword>
<keyword id="KW-1185">Reference proteome</keyword>
<keyword id="KW-0964">Secreted</keyword>
<protein>
    <recommendedName>
        <fullName>Somatoliberin</fullName>
    </recommendedName>
    <alternativeName>
        <fullName>Growth hormone-releasing factor</fullName>
        <shortName>GRF</shortName>
    </alternativeName>
    <alternativeName>
        <fullName>Growth hormone-releasing hormone</fullName>
        <shortName>GHRH</shortName>
    </alternativeName>
</protein>
<accession>P07217</accession>
<gene>
    <name type="primary">GHRH</name>
</gene>